<organism>
    <name type="scientific">Francisella tularensis subsp. novicida (strain U112)</name>
    <dbReference type="NCBI Taxonomy" id="401614"/>
    <lineage>
        <taxon>Bacteria</taxon>
        <taxon>Pseudomonadati</taxon>
        <taxon>Pseudomonadota</taxon>
        <taxon>Gammaproteobacteria</taxon>
        <taxon>Thiotrichales</taxon>
        <taxon>Francisellaceae</taxon>
        <taxon>Francisella</taxon>
    </lineage>
</organism>
<proteinExistence type="inferred from homology"/>
<reference key="1">
    <citation type="journal article" date="2007" name="Genome Biol.">
        <title>Comparison of Francisella tularensis genomes reveals evolutionary events associated with the emergence of human pathogenic strains.</title>
        <authorList>
            <person name="Rohmer L."/>
            <person name="Fong C."/>
            <person name="Abmayr S."/>
            <person name="Wasnick M."/>
            <person name="Larson Freeman T.J."/>
            <person name="Radey M."/>
            <person name="Guina T."/>
            <person name="Svensson K."/>
            <person name="Hayden H.S."/>
            <person name="Jacobs M."/>
            <person name="Gallagher L.A."/>
            <person name="Manoil C."/>
            <person name="Ernst R.K."/>
            <person name="Drees B."/>
            <person name="Buckley D."/>
            <person name="Haugen E."/>
            <person name="Bovee D."/>
            <person name="Zhou Y."/>
            <person name="Chang J."/>
            <person name="Levy R."/>
            <person name="Lim R."/>
            <person name="Gillett W."/>
            <person name="Guenthener D."/>
            <person name="Kang A."/>
            <person name="Shaffer S.A."/>
            <person name="Taylor G."/>
            <person name="Chen J."/>
            <person name="Gallis B."/>
            <person name="D'Argenio D.A."/>
            <person name="Forsman M."/>
            <person name="Olson M.V."/>
            <person name="Goodlett D.R."/>
            <person name="Kaul R."/>
            <person name="Miller S.I."/>
            <person name="Brittnacher M.J."/>
        </authorList>
    </citation>
    <scope>NUCLEOTIDE SEQUENCE [LARGE SCALE GENOMIC DNA]</scope>
    <source>
        <strain>U112</strain>
    </source>
</reference>
<gene>
    <name evidence="1" type="primary">rpsS</name>
    <name type="ordered locus">FTN_0243</name>
</gene>
<sequence length="92" mass="10499">MPRSLKKGPFVDHHLLKKVFEAQESNSKKPIKTWSRRSMIVPDMIGLTIAVHNGQQHVPVLMTEEMVGHKLGEFVVTRNYRGHAADKKAKKK</sequence>
<comment type="function">
    <text evidence="1">Protein S19 forms a complex with S13 that binds strongly to the 16S ribosomal RNA.</text>
</comment>
<comment type="similarity">
    <text evidence="1">Belongs to the universal ribosomal protein uS19 family.</text>
</comment>
<feature type="chain" id="PRO_1000051051" description="Small ribosomal subunit protein uS19">
    <location>
        <begin position="1"/>
        <end position="92"/>
    </location>
</feature>
<dbReference type="EMBL" id="CP000439">
    <property type="protein sequence ID" value="ABK89152.1"/>
    <property type="molecule type" value="Genomic_DNA"/>
</dbReference>
<dbReference type="RefSeq" id="WP_003027195.1">
    <property type="nucleotide sequence ID" value="NZ_CP009633.1"/>
</dbReference>
<dbReference type="SMR" id="A0Q4I7"/>
<dbReference type="GeneID" id="75264257"/>
<dbReference type="KEGG" id="ftn:FTN_0243"/>
<dbReference type="KEGG" id="ftx:AW25_1799"/>
<dbReference type="BioCyc" id="FTUL401614:G1G75-254-MONOMER"/>
<dbReference type="Proteomes" id="UP000000762">
    <property type="component" value="Chromosome"/>
</dbReference>
<dbReference type="GO" id="GO:0005737">
    <property type="term" value="C:cytoplasm"/>
    <property type="evidence" value="ECO:0007669"/>
    <property type="project" value="UniProtKB-ARBA"/>
</dbReference>
<dbReference type="GO" id="GO:0015935">
    <property type="term" value="C:small ribosomal subunit"/>
    <property type="evidence" value="ECO:0007669"/>
    <property type="project" value="InterPro"/>
</dbReference>
<dbReference type="GO" id="GO:0019843">
    <property type="term" value="F:rRNA binding"/>
    <property type="evidence" value="ECO:0007669"/>
    <property type="project" value="UniProtKB-UniRule"/>
</dbReference>
<dbReference type="GO" id="GO:0003735">
    <property type="term" value="F:structural constituent of ribosome"/>
    <property type="evidence" value="ECO:0007669"/>
    <property type="project" value="InterPro"/>
</dbReference>
<dbReference type="GO" id="GO:0000028">
    <property type="term" value="P:ribosomal small subunit assembly"/>
    <property type="evidence" value="ECO:0007669"/>
    <property type="project" value="TreeGrafter"/>
</dbReference>
<dbReference type="GO" id="GO:0006412">
    <property type="term" value="P:translation"/>
    <property type="evidence" value="ECO:0007669"/>
    <property type="project" value="UniProtKB-UniRule"/>
</dbReference>
<dbReference type="FunFam" id="3.30.860.10:FF:000001">
    <property type="entry name" value="30S ribosomal protein S19"/>
    <property type="match status" value="1"/>
</dbReference>
<dbReference type="Gene3D" id="3.30.860.10">
    <property type="entry name" value="30s Ribosomal Protein S19, Chain A"/>
    <property type="match status" value="1"/>
</dbReference>
<dbReference type="HAMAP" id="MF_00531">
    <property type="entry name" value="Ribosomal_uS19"/>
    <property type="match status" value="1"/>
</dbReference>
<dbReference type="InterPro" id="IPR002222">
    <property type="entry name" value="Ribosomal_uS19"/>
</dbReference>
<dbReference type="InterPro" id="IPR005732">
    <property type="entry name" value="Ribosomal_uS19_bac-type"/>
</dbReference>
<dbReference type="InterPro" id="IPR020934">
    <property type="entry name" value="Ribosomal_uS19_CS"/>
</dbReference>
<dbReference type="InterPro" id="IPR023575">
    <property type="entry name" value="Ribosomal_uS19_SF"/>
</dbReference>
<dbReference type="NCBIfam" id="TIGR01050">
    <property type="entry name" value="rpsS_bact"/>
    <property type="match status" value="1"/>
</dbReference>
<dbReference type="PANTHER" id="PTHR11880">
    <property type="entry name" value="RIBOSOMAL PROTEIN S19P FAMILY MEMBER"/>
    <property type="match status" value="1"/>
</dbReference>
<dbReference type="PANTHER" id="PTHR11880:SF8">
    <property type="entry name" value="SMALL RIBOSOMAL SUBUNIT PROTEIN US19M"/>
    <property type="match status" value="1"/>
</dbReference>
<dbReference type="Pfam" id="PF00203">
    <property type="entry name" value="Ribosomal_S19"/>
    <property type="match status" value="1"/>
</dbReference>
<dbReference type="PIRSF" id="PIRSF002144">
    <property type="entry name" value="Ribosomal_S19"/>
    <property type="match status" value="1"/>
</dbReference>
<dbReference type="PRINTS" id="PR00975">
    <property type="entry name" value="RIBOSOMALS19"/>
</dbReference>
<dbReference type="SUPFAM" id="SSF54570">
    <property type="entry name" value="Ribosomal protein S19"/>
    <property type="match status" value="1"/>
</dbReference>
<dbReference type="PROSITE" id="PS00323">
    <property type="entry name" value="RIBOSOMAL_S19"/>
    <property type="match status" value="1"/>
</dbReference>
<accession>A0Q4I7</accession>
<name>RS19_FRATN</name>
<protein>
    <recommendedName>
        <fullName evidence="1">Small ribosomal subunit protein uS19</fullName>
    </recommendedName>
    <alternativeName>
        <fullName evidence="2">30S ribosomal protein S19</fullName>
    </alternativeName>
</protein>
<keyword id="KW-0687">Ribonucleoprotein</keyword>
<keyword id="KW-0689">Ribosomal protein</keyword>
<keyword id="KW-0694">RNA-binding</keyword>
<keyword id="KW-0699">rRNA-binding</keyword>
<evidence type="ECO:0000255" key="1">
    <source>
        <dbReference type="HAMAP-Rule" id="MF_00531"/>
    </source>
</evidence>
<evidence type="ECO:0000305" key="2"/>